<protein>
    <recommendedName>
        <fullName evidence="1">Protein nucleotidyltransferase YdiU</fullName>
        <ecNumber evidence="1">2.7.7.-</ecNumber>
    </recommendedName>
    <alternativeName>
        <fullName evidence="1">Protein adenylyltransferase YdiU</fullName>
        <ecNumber evidence="1">2.7.7.108</ecNumber>
    </alternativeName>
    <alternativeName>
        <fullName evidence="1">Protein uridylyltransferase YdiU</fullName>
        <ecNumber evidence="1">2.7.7.-</ecNumber>
    </alternativeName>
</protein>
<evidence type="ECO:0000255" key="1">
    <source>
        <dbReference type="HAMAP-Rule" id="MF_00692"/>
    </source>
</evidence>
<proteinExistence type="inferred from homology"/>
<name>SELO_RHOJR</name>
<gene>
    <name evidence="1" type="primary">ydiU</name>
    <name evidence="1" type="synonym">selO</name>
    <name type="ordered locus">RHA1_ro00577</name>
</gene>
<reference key="1">
    <citation type="journal article" date="2006" name="Proc. Natl. Acad. Sci. U.S.A.">
        <title>The complete genome of Rhodococcus sp. RHA1 provides insights into a catabolic powerhouse.</title>
        <authorList>
            <person name="McLeod M.P."/>
            <person name="Warren R.L."/>
            <person name="Hsiao W.W.L."/>
            <person name="Araki N."/>
            <person name="Myhre M."/>
            <person name="Fernandes C."/>
            <person name="Miyazawa D."/>
            <person name="Wong W."/>
            <person name="Lillquist A.L."/>
            <person name="Wang D."/>
            <person name="Dosanjh M."/>
            <person name="Hara H."/>
            <person name="Petrescu A."/>
            <person name="Morin R.D."/>
            <person name="Yang G."/>
            <person name="Stott J.M."/>
            <person name="Schein J.E."/>
            <person name="Shin H."/>
            <person name="Smailus D."/>
            <person name="Siddiqui A.S."/>
            <person name="Marra M.A."/>
            <person name="Jones S.J.M."/>
            <person name="Holt R."/>
            <person name="Brinkman F.S.L."/>
            <person name="Miyauchi K."/>
            <person name="Fukuda M."/>
            <person name="Davies J.E."/>
            <person name="Mohn W.W."/>
            <person name="Eltis L.D."/>
        </authorList>
    </citation>
    <scope>NUCLEOTIDE SEQUENCE [LARGE SCALE GENOMIC DNA]</scope>
    <source>
        <strain>RHA1</strain>
    </source>
</reference>
<sequence>MRGGPCGGYPRRMTAIPDSTVGTNTAVAGLESTFADELGALTVPWQGAHAPDPTLLVLNEQLAASLRLDVQTLRSEDGVGVLSGSTAPAGAKPVAMAYAGHQFGGYAPLLGDGRALLLGELTSSDGQRVDLHLKGSGPTPFSRGGDGFAVIGPMLREYLVSEAMYALGIPTTRALSVVATGQNVHRYGAEPGAVLARVAASHLRVGTFEYAVRQGEVLQPLADYAIARHYPELTELPPGRDGNRYLSFFEAVVEAQASLVAKWMLTGFVHGVMNTDNTTISGETIDYGPCAFLDAFDPAAVFSSIDHGGRYAFGNQPVVLKWNLARLAETLLTLFDSTPDDAITAVSAVLATFDERYDGHYAAGMAAKLGLAGELVDRALVDDLLTLLEEHGADWTGTFRALADELRGHSTPLDGLVPREHIGPWLERWRGDLTKHGRGAAETADAMDCVNPLYIPRNHQLDAALRAATDGRLAPFEKLLEVVTHPFDRRDEWSDYTTPAPPSFSKSFQTFCGT</sequence>
<organism>
    <name type="scientific">Rhodococcus jostii (strain RHA1)</name>
    <dbReference type="NCBI Taxonomy" id="101510"/>
    <lineage>
        <taxon>Bacteria</taxon>
        <taxon>Bacillati</taxon>
        <taxon>Actinomycetota</taxon>
        <taxon>Actinomycetes</taxon>
        <taxon>Mycobacteriales</taxon>
        <taxon>Nocardiaceae</taxon>
        <taxon>Rhodococcus</taxon>
    </lineage>
</organism>
<feature type="chain" id="PRO_0000271855" description="Protein nucleotidyltransferase YdiU">
    <location>
        <begin position="1"/>
        <end position="514"/>
    </location>
</feature>
<feature type="active site" description="Proton acceptor" evidence="1">
    <location>
        <position position="276"/>
    </location>
</feature>
<feature type="binding site" evidence="1">
    <location>
        <position position="111"/>
    </location>
    <ligand>
        <name>ATP</name>
        <dbReference type="ChEBI" id="CHEBI:30616"/>
    </ligand>
</feature>
<feature type="binding site" evidence="1">
    <location>
        <position position="113"/>
    </location>
    <ligand>
        <name>ATP</name>
        <dbReference type="ChEBI" id="CHEBI:30616"/>
    </ligand>
</feature>
<feature type="binding site" evidence="1">
    <location>
        <position position="114"/>
    </location>
    <ligand>
        <name>ATP</name>
        <dbReference type="ChEBI" id="CHEBI:30616"/>
    </ligand>
</feature>
<feature type="binding site" evidence="1">
    <location>
        <position position="134"/>
    </location>
    <ligand>
        <name>ATP</name>
        <dbReference type="ChEBI" id="CHEBI:30616"/>
    </ligand>
</feature>
<feature type="binding site" evidence="1">
    <location>
        <position position="146"/>
    </location>
    <ligand>
        <name>ATP</name>
        <dbReference type="ChEBI" id="CHEBI:30616"/>
    </ligand>
</feature>
<feature type="binding site" evidence="1">
    <location>
        <position position="147"/>
    </location>
    <ligand>
        <name>ATP</name>
        <dbReference type="ChEBI" id="CHEBI:30616"/>
    </ligand>
</feature>
<feature type="binding site" evidence="1">
    <location>
        <position position="197"/>
    </location>
    <ligand>
        <name>ATP</name>
        <dbReference type="ChEBI" id="CHEBI:30616"/>
    </ligand>
</feature>
<feature type="binding site" evidence="1">
    <location>
        <position position="204"/>
    </location>
    <ligand>
        <name>ATP</name>
        <dbReference type="ChEBI" id="CHEBI:30616"/>
    </ligand>
</feature>
<feature type="binding site" evidence="1">
    <location>
        <position position="277"/>
    </location>
    <ligand>
        <name>Mg(2+)</name>
        <dbReference type="ChEBI" id="CHEBI:18420"/>
    </ligand>
</feature>
<feature type="binding site" evidence="1">
    <location>
        <position position="286"/>
    </location>
    <ligand>
        <name>ATP</name>
        <dbReference type="ChEBI" id="CHEBI:30616"/>
    </ligand>
</feature>
<feature type="binding site" evidence="1">
    <location>
        <position position="286"/>
    </location>
    <ligand>
        <name>Mg(2+)</name>
        <dbReference type="ChEBI" id="CHEBI:18420"/>
    </ligand>
</feature>
<keyword id="KW-0067">ATP-binding</keyword>
<keyword id="KW-0460">Magnesium</keyword>
<keyword id="KW-0464">Manganese</keyword>
<keyword id="KW-0479">Metal-binding</keyword>
<keyword id="KW-0547">Nucleotide-binding</keyword>
<keyword id="KW-0548">Nucleotidyltransferase</keyword>
<keyword id="KW-0808">Transferase</keyword>
<dbReference type="EC" id="2.7.7.-" evidence="1"/>
<dbReference type="EC" id="2.7.7.108" evidence="1"/>
<dbReference type="EMBL" id="CP000431">
    <property type="protein sequence ID" value="ABG92412.1"/>
    <property type="molecule type" value="Genomic_DNA"/>
</dbReference>
<dbReference type="RefSeq" id="WP_011593836.1">
    <property type="nucleotide sequence ID" value="NC_008268.1"/>
</dbReference>
<dbReference type="SMR" id="Q0SJ74"/>
<dbReference type="KEGG" id="rha:RHA1_ro00577"/>
<dbReference type="PATRIC" id="fig|101510.16.peg.604"/>
<dbReference type="eggNOG" id="COG0397">
    <property type="taxonomic scope" value="Bacteria"/>
</dbReference>
<dbReference type="HOGENOM" id="CLU_010245_4_1_11"/>
<dbReference type="OrthoDB" id="9776281at2"/>
<dbReference type="Proteomes" id="UP000008710">
    <property type="component" value="Chromosome"/>
</dbReference>
<dbReference type="GO" id="GO:0070733">
    <property type="term" value="F:AMPylase activity"/>
    <property type="evidence" value="ECO:0007669"/>
    <property type="project" value="RHEA"/>
</dbReference>
<dbReference type="GO" id="GO:0005524">
    <property type="term" value="F:ATP binding"/>
    <property type="evidence" value="ECO:0007669"/>
    <property type="project" value="UniProtKB-UniRule"/>
</dbReference>
<dbReference type="GO" id="GO:0000287">
    <property type="term" value="F:magnesium ion binding"/>
    <property type="evidence" value="ECO:0007669"/>
    <property type="project" value="UniProtKB-UniRule"/>
</dbReference>
<dbReference type="HAMAP" id="MF_00692">
    <property type="entry name" value="YdiU_SelO"/>
    <property type="match status" value="1"/>
</dbReference>
<dbReference type="InterPro" id="IPR003846">
    <property type="entry name" value="SelO"/>
</dbReference>
<dbReference type="NCBIfam" id="NF000658">
    <property type="entry name" value="PRK00029.1"/>
    <property type="match status" value="1"/>
</dbReference>
<dbReference type="PANTHER" id="PTHR32057">
    <property type="entry name" value="PROTEIN ADENYLYLTRANSFERASE SELO, MITOCHONDRIAL"/>
    <property type="match status" value="1"/>
</dbReference>
<dbReference type="PANTHER" id="PTHR32057:SF14">
    <property type="entry name" value="PROTEIN ADENYLYLTRANSFERASE SELO, MITOCHONDRIAL"/>
    <property type="match status" value="1"/>
</dbReference>
<dbReference type="Pfam" id="PF02696">
    <property type="entry name" value="SelO"/>
    <property type="match status" value="1"/>
</dbReference>
<comment type="function">
    <text evidence="1">Nucleotidyltransferase involved in the post-translational modification of proteins. It can catalyze the addition of adenosine monophosphate (AMP) or uridine monophosphate (UMP) to a protein, resulting in modifications known as AMPylation and UMPylation.</text>
</comment>
<comment type="catalytic activity">
    <reaction evidence="1">
        <text>L-seryl-[protein] + ATP = 3-O-(5'-adenylyl)-L-seryl-[protein] + diphosphate</text>
        <dbReference type="Rhea" id="RHEA:58120"/>
        <dbReference type="Rhea" id="RHEA-COMP:9863"/>
        <dbReference type="Rhea" id="RHEA-COMP:15073"/>
        <dbReference type="ChEBI" id="CHEBI:29999"/>
        <dbReference type="ChEBI" id="CHEBI:30616"/>
        <dbReference type="ChEBI" id="CHEBI:33019"/>
        <dbReference type="ChEBI" id="CHEBI:142516"/>
        <dbReference type="EC" id="2.7.7.108"/>
    </reaction>
</comment>
<comment type="catalytic activity">
    <reaction evidence="1">
        <text>L-threonyl-[protein] + ATP = 3-O-(5'-adenylyl)-L-threonyl-[protein] + diphosphate</text>
        <dbReference type="Rhea" id="RHEA:54292"/>
        <dbReference type="Rhea" id="RHEA-COMP:11060"/>
        <dbReference type="Rhea" id="RHEA-COMP:13847"/>
        <dbReference type="ChEBI" id="CHEBI:30013"/>
        <dbReference type="ChEBI" id="CHEBI:30616"/>
        <dbReference type="ChEBI" id="CHEBI:33019"/>
        <dbReference type="ChEBI" id="CHEBI:138113"/>
        <dbReference type="EC" id="2.7.7.108"/>
    </reaction>
</comment>
<comment type="catalytic activity">
    <reaction evidence="1">
        <text>L-tyrosyl-[protein] + ATP = O-(5'-adenylyl)-L-tyrosyl-[protein] + diphosphate</text>
        <dbReference type="Rhea" id="RHEA:54288"/>
        <dbReference type="Rhea" id="RHEA-COMP:10136"/>
        <dbReference type="Rhea" id="RHEA-COMP:13846"/>
        <dbReference type="ChEBI" id="CHEBI:30616"/>
        <dbReference type="ChEBI" id="CHEBI:33019"/>
        <dbReference type="ChEBI" id="CHEBI:46858"/>
        <dbReference type="ChEBI" id="CHEBI:83624"/>
        <dbReference type="EC" id="2.7.7.108"/>
    </reaction>
</comment>
<comment type="catalytic activity">
    <reaction evidence="1">
        <text>L-histidyl-[protein] + UTP = N(tele)-(5'-uridylyl)-L-histidyl-[protein] + diphosphate</text>
        <dbReference type="Rhea" id="RHEA:83891"/>
        <dbReference type="Rhea" id="RHEA-COMP:9745"/>
        <dbReference type="Rhea" id="RHEA-COMP:20239"/>
        <dbReference type="ChEBI" id="CHEBI:29979"/>
        <dbReference type="ChEBI" id="CHEBI:33019"/>
        <dbReference type="ChEBI" id="CHEBI:46398"/>
        <dbReference type="ChEBI" id="CHEBI:233474"/>
    </reaction>
</comment>
<comment type="catalytic activity">
    <reaction evidence="1">
        <text>L-seryl-[protein] + UTP = O-(5'-uridylyl)-L-seryl-[protein] + diphosphate</text>
        <dbReference type="Rhea" id="RHEA:64604"/>
        <dbReference type="Rhea" id="RHEA-COMP:9863"/>
        <dbReference type="Rhea" id="RHEA-COMP:16635"/>
        <dbReference type="ChEBI" id="CHEBI:29999"/>
        <dbReference type="ChEBI" id="CHEBI:33019"/>
        <dbReference type="ChEBI" id="CHEBI:46398"/>
        <dbReference type="ChEBI" id="CHEBI:156051"/>
    </reaction>
</comment>
<comment type="catalytic activity">
    <reaction evidence="1">
        <text>L-tyrosyl-[protein] + UTP = O-(5'-uridylyl)-L-tyrosyl-[protein] + diphosphate</text>
        <dbReference type="Rhea" id="RHEA:83887"/>
        <dbReference type="Rhea" id="RHEA-COMP:10136"/>
        <dbReference type="Rhea" id="RHEA-COMP:20238"/>
        <dbReference type="ChEBI" id="CHEBI:33019"/>
        <dbReference type="ChEBI" id="CHEBI:46398"/>
        <dbReference type="ChEBI" id="CHEBI:46858"/>
        <dbReference type="ChEBI" id="CHEBI:90602"/>
    </reaction>
</comment>
<comment type="cofactor">
    <cofactor evidence="1">
        <name>Mg(2+)</name>
        <dbReference type="ChEBI" id="CHEBI:18420"/>
    </cofactor>
    <cofactor evidence="1">
        <name>Mn(2+)</name>
        <dbReference type="ChEBI" id="CHEBI:29035"/>
    </cofactor>
</comment>
<comment type="similarity">
    <text evidence="1">Belongs to the SELO family.</text>
</comment>
<accession>Q0SJ74</accession>